<keyword id="KW-0903">Direct protein sequencing</keyword>
<keyword id="KW-1015">Disulfide bond</keyword>
<keyword id="KW-0274">FAD</keyword>
<keyword id="KW-0285">Flavoprotein</keyword>
<keyword id="KW-0496">Mitochondrion</keyword>
<keyword id="KW-0520">NAD</keyword>
<keyword id="KW-0560">Oxidoreductase</keyword>
<keyword id="KW-0676">Redox-active center</keyword>
<keyword id="KW-0809">Transit peptide</keyword>
<feature type="transit peptide" description="Mitochondrion" evidence="2">
    <location>
        <begin position="1"/>
        <end position="30"/>
    </location>
</feature>
<feature type="chain" id="PRO_0000424138" description="Leghemoglobin reductase">
    <location>
        <begin position="31"/>
        <end position="523"/>
    </location>
</feature>
<feature type="active site" description="Proton acceptor" evidence="1">
    <location>
        <position position="479"/>
    </location>
</feature>
<feature type="binding site" evidence="1">
    <location>
        <begin position="66"/>
        <end position="75"/>
    </location>
    <ligand>
        <name>FAD</name>
        <dbReference type="ChEBI" id="CHEBI:57692"/>
    </ligand>
</feature>
<feature type="binding site" evidence="1">
    <location>
        <position position="84"/>
    </location>
    <ligand>
        <name>FAD</name>
        <dbReference type="ChEBI" id="CHEBI:57692"/>
    </ligand>
</feature>
<feature type="binding site" evidence="1">
    <location>
        <position position="148"/>
    </location>
    <ligand>
        <name>FAD</name>
        <dbReference type="ChEBI" id="CHEBI:57692"/>
    </ligand>
</feature>
<feature type="binding site" evidence="1">
    <location>
        <begin position="177"/>
        <end position="179"/>
    </location>
    <ligand>
        <name>FAD</name>
        <dbReference type="ChEBI" id="CHEBI:57692"/>
    </ligand>
</feature>
<feature type="binding site" evidence="1">
    <location>
        <begin position="214"/>
        <end position="221"/>
    </location>
    <ligand>
        <name>NAD(+)</name>
        <dbReference type="ChEBI" id="CHEBI:57540"/>
    </ligand>
</feature>
<feature type="binding site" evidence="1">
    <location>
        <position position="237"/>
    </location>
    <ligand>
        <name>NAD(+)</name>
        <dbReference type="ChEBI" id="CHEBI:57540"/>
    </ligand>
</feature>
<feature type="binding site" evidence="1">
    <location>
        <position position="271"/>
    </location>
    <ligand>
        <name>NAD(+)</name>
        <dbReference type="ChEBI" id="CHEBI:57540"/>
    </ligand>
</feature>
<feature type="binding site" evidence="1">
    <location>
        <position position="306"/>
    </location>
    <ligand>
        <name>NAD(+)</name>
        <dbReference type="ChEBI" id="CHEBI:57540"/>
    </ligand>
</feature>
<feature type="binding site" evidence="1">
    <location>
        <position position="347"/>
    </location>
    <ligand>
        <name>FAD</name>
        <dbReference type="ChEBI" id="CHEBI:57692"/>
    </ligand>
</feature>
<feature type="binding site" evidence="1">
    <location>
        <begin position="353"/>
        <end position="356"/>
    </location>
    <ligand>
        <name>FAD</name>
        <dbReference type="ChEBI" id="CHEBI:57692"/>
    </ligand>
</feature>
<feature type="disulfide bond" description="Redox-active" evidence="1">
    <location>
        <begin position="75"/>
        <end position="80"/>
    </location>
</feature>
<name>LEGRE_VIGUN</name>
<comment type="function">
    <text evidence="2">Reduces ferric leghemoglobin (Lb) to ferrous Lb.</text>
</comment>
<comment type="catalytic activity">
    <reaction evidence="2">
        <text>2 Fe(III)-[leghemoglobin] + NADH = 2 Fe(II)-[leghemoglobin] + NAD(+) + H(+)</text>
        <dbReference type="Rhea" id="RHEA:16161"/>
        <dbReference type="Rhea" id="RHEA-COMP:13792"/>
        <dbReference type="Rhea" id="RHEA-COMP:13793"/>
        <dbReference type="ChEBI" id="CHEBI:15378"/>
        <dbReference type="ChEBI" id="CHEBI:29033"/>
        <dbReference type="ChEBI" id="CHEBI:29034"/>
        <dbReference type="ChEBI" id="CHEBI:57540"/>
        <dbReference type="ChEBI" id="CHEBI:57945"/>
        <dbReference type="EC" id="1.6.2.6"/>
    </reaction>
</comment>
<comment type="catalytic activity">
    <reaction evidence="2">
        <text>2 Fe(III)-[leghemoglobin] + NADPH = 2 Fe(II)-[leghemoglobin] + NADP(+) + H(+)</text>
        <dbReference type="Rhea" id="RHEA:16157"/>
        <dbReference type="Rhea" id="RHEA-COMP:13792"/>
        <dbReference type="Rhea" id="RHEA-COMP:13793"/>
        <dbReference type="ChEBI" id="CHEBI:15378"/>
        <dbReference type="ChEBI" id="CHEBI:29033"/>
        <dbReference type="ChEBI" id="CHEBI:29034"/>
        <dbReference type="ChEBI" id="CHEBI:57783"/>
        <dbReference type="ChEBI" id="CHEBI:58349"/>
        <dbReference type="EC" id="1.6.2.6"/>
    </reaction>
</comment>
<comment type="cofactor">
    <cofactor evidence="1">
        <name>FAD</name>
        <dbReference type="ChEBI" id="CHEBI:57692"/>
    </cofactor>
    <text evidence="1">Binds 1 FAD per subunit.</text>
</comment>
<comment type="biophysicochemical properties">
    <kinetics>
        <KM evidence="2">10.4 uM for ferrileghemoglobin</KM>
        <Vmax evidence="2">221.0 nmol/min/mg enzyme</Vmax>
        <text>kcat is 3.1 sec(-1).</text>
    </kinetics>
    <phDependence>
        <text evidence="2">Optimum pH is 6.5.</text>
    </phDependence>
</comment>
<comment type="subunit">
    <text evidence="2">Homodimer.</text>
</comment>
<comment type="subcellular location">
    <subcellularLocation>
        <location evidence="4">Mitochondrion</location>
    </subcellularLocation>
</comment>
<comment type="similarity">
    <text evidence="3">Belongs to the class-I pyridine nucleotide-disulfide oxidoreductase family.</text>
</comment>
<protein>
    <recommendedName>
        <fullName>Leghemoglobin reductase</fullName>
        <ecNumber>1.6.2.6</ecNumber>
    </recommendedName>
    <alternativeName>
        <fullName>Ferric leghemoglobin reductase</fullName>
        <shortName>FLbR</shortName>
    </alternativeName>
</protein>
<evidence type="ECO:0000250" key="1"/>
<evidence type="ECO:0000269" key="2">
    <source>
    </source>
</evidence>
<evidence type="ECO:0000305" key="3"/>
<evidence type="ECO:0000305" key="4">
    <source>
    </source>
</evidence>
<gene>
    <name type="primary">FLBR</name>
</gene>
<dbReference type="EC" id="1.6.2.6"/>
<dbReference type="EMBL" id="AF181096">
    <property type="protein sequence ID" value="AAD53185.1"/>
    <property type="molecule type" value="mRNA"/>
</dbReference>
<dbReference type="SMR" id="Q9SPB1"/>
<dbReference type="SABIO-RK" id="Q9SPB1"/>
<dbReference type="GO" id="GO:0005739">
    <property type="term" value="C:mitochondrion"/>
    <property type="evidence" value="ECO:0007669"/>
    <property type="project" value="UniProtKB-SubCell"/>
</dbReference>
<dbReference type="GO" id="GO:0045252">
    <property type="term" value="C:oxoglutarate dehydrogenase complex"/>
    <property type="evidence" value="ECO:0007669"/>
    <property type="project" value="TreeGrafter"/>
</dbReference>
<dbReference type="GO" id="GO:0004148">
    <property type="term" value="F:dihydrolipoyl dehydrogenase (NADH) activity"/>
    <property type="evidence" value="ECO:0007669"/>
    <property type="project" value="InterPro"/>
</dbReference>
<dbReference type="GO" id="GO:0050660">
    <property type="term" value="F:flavin adenine dinucleotide binding"/>
    <property type="evidence" value="ECO:0007669"/>
    <property type="project" value="InterPro"/>
</dbReference>
<dbReference type="GO" id="GO:0015043">
    <property type="term" value="F:leghemoglobin reductase [NAD(P)H] activity"/>
    <property type="evidence" value="ECO:0000314"/>
    <property type="project" value="UniProtKB"/>
</dbReference>
<dbReference type="GO" id="GO:0006103">
    <property type="term" value="P:2-oxoglutarate metabolic process"/>
    <property type="evidence" value="ECO:0007669"/>
    <property type="project" value="TreeGrafter"/>
</dbReference>
<dbReference type="FunFam" id="3.30.390.30:FF:000001">
    <property type="entry name" value="Dihydrolipoyl dehydrogenase"/>
    <property type="match status" value="1"/>
</dbReference>
<dbReference type="FunFam" id="3.50.50.60:FF:000001">
    <property type="entry name" value="Dihydrolipoyl dehydrogenase, mitochondrial"/>
    <property type="match status" value="1"/>
</dbReference>
<dbReference type="Gene3D" id="3.30.390.30">
    <property type="match status" value="1"/>
</dbReference>
<dbReference type="Gene3D" id="3.50.50.60">
    <property type="entry name" value="FAD/NAD(P)-binding domain"/>
    <property type="match status" value="2"/>
</dbReference>
<dbReference type="InterPro" id="IPR050151">
    <property type="entry name" value="Class-I_Pyr_Nuc-Dis_Oxidored"/>
</dbReference>
<dbReference type="InterPro" id="IPR036188">
    <property type="entry name" value="FAD/NAD-bd_sf"/>
</dbReference>
<dbReference type="InterPro" id="IPR023753">
    <property type="entry name" value="FAD/NAD-binding_dom"/>
</dbReference>
<dbReference type="InterPro" id="IPR016156">
    <property type="entry name" value="FAD/NAD-linked_Rdtase_dimer_sf"/>
</dbReference>
<dbReference type="InterPro" id="IPR006258">
    <property type="entry name" value="Lipoamide_DH"/>
</dbReference>
<dbReference type="InterPro" id="IPR001100">
    <property type="entry name" value="Pyr_nuc-diS_OxRdtase"/>
</dbReference>
<dbReference type="InterPro" id="IPR004099">
    <property type="entry name" value="Pyr_nucl-diS_OxRdtase_dimer"/>
</dbReference>
<dbReference type="InterPro" id="IPR012999">
    <property type="entry name" value="Pyr_OxRdtase_I_AS"/>
</dbReference>
<dbReference type="NCBIfam" id="TIGR01350">
    <property type="entry name" value="lipoamide_DH"/>
    <property type="match status" value="1"/>
</dbReference>
<dbReference type="PANTHER" id="PTHR22912:SF221">
    <property type="entry name" value="DIHYDROLIPOYL DEHYDROGENASE"/>
    <property type="match status" value="1"/>
</dbReference>
<dbReference type="PANTHER" id="PTHR22912">
    <property type="entry name" value="DISULFIDE OXIDOREDUCTASE"/>
    <property type="match status" value="1"/>
</dbReference>
<dbReference type="Pfam" id="PF07992">
    <property type="entry name" value="Pyr_redox_2"/>
    <property type="match status" value="1"/>
</dbReference>
<dbReference type="Pfam" id="PF02852">
    <property type="entry name" value="Pyr_redox_dim"/>
    <property type="match status" value="1"/>
</dbReference>
<dbReference type="PIRSF" id="PIRSF000350">
    <property type="entry name" value="Mercury_reductase_MerA"/>
    <property type="match status" value="1"/>
</dbReference>
<dbReference type="PRINTS" id="PR00368">
    <property type="entry name" value="FADPNR"/>
</dbReference>
<dbReference type="PRINTS" id="PR00411">
    <property type="entry name" value="PNDRDTASEI"/>
</dbReference>
<dbReference type="SUPFAM" id="SSF51905">
    <property type="entry name" value="FAD/NAD(P)-binding domain"/>
    <property type="match status" value="1"/>
</dbReference>
<dbReference type="SUPFAM" id="SSF55424">
    <property type="entry name" value="FAD/NAD-linked reductases, dimerisation (C-terminal) domain"/>
    <property type="match status" value="1"/>
</dbReference>
<dbReference type="PROSITE" id="PS00076">
    <property type="entry name" value="PYRIDINE_REDOX_1"/>
    <property type="match status" value="1"/>
</dbReference>
<proteinExistence type="evidence at protein level"/>
<reference key="1">
    <citation type="journal article" date="2000" name="Plant Sci.">
        <title>Analysis of a ferric leghemoglobin reductase from cowpea (Vigna unguiculata) root nodules.</title>
        <authorList>
            <person name="Luan P."/>
            <person name="Arechaga-Ocampo E."/>
            <person name="Sarath G."/>
            <person name="Arredondo-Peter R."/>
            <person name="Klucas R.V."/>
        </authorList>
    </citation>
    <scope>NUCLEOTIDE SEQUENCE [MRNA]</scope>
    <scope>PROTEIN SEQUENCE OF 31-50</scope>
    <scope>FUNCTION</scope>
    <scope>BIOPHYSICOCHEMICAL PROPERTIES</scope>
    <scope>CATALYTIC ACTIVITY</scope>
    <scope>SUBUNIT</scope>
    <scope>SUBCELLULAR LOCATION</scope>
    <source>
        <tissue>Root nodule</tissue>
    </source>
</reference>
<accession>Q9SPB1</accession>
<organism>
    <name type="scientific">Vigna unguiculata</name>
    <name type="common">Cowpea</name>
    <dbReference type="NCBI Taxonomy" id="3917"/>
    <lineage>
        <taxon>Eukaryota</taxon>
        <taxon>Viridiplantae</taxon>
        <taxon>Streptophyta</taxon>
        <taxon>Embryophyta</taxon>
        <taxon>Tracheophyta</taxon>
        <taxon>Spermatophyta</taxon>
        <taxon>Magnoliopsida</taxon>
        <taxon>eudicotyledons</taxon>
        <taxon>Gunneridae</taxon>
        <taxon>Pentapetalae</taxon>
        <taxon>rosids</taxon>
        <taxon>fabids</taxon>
        <taxon>Fabales</taxon>
        <taxon>Fabaceae</taxon>
        <taxon>Papilionoideae</taxon>
        <taxon>50 kb inversion clade</taxon>
        <taxon>NPAAA clade</taxon>
        <taxon>indigoferoid/millettioid clade</taxon>
        <taxon>Phaseoleae</taxon>
        <taxon>Vigna</taxon>
    </lineage>
</organism>
<sequence length="523" mass="55780">MAMASLARRKAYAVVSSSRSSVFLTSLRGFASGSDENDVVVIGGGPGGYVAAIKASQLGLKTTCIEKRGTLGGTCLNVGCIPSKALLHSSHMYHEAKHSFANHGIKLSSVEVDLAGMMAQKDKAVSNLTKGIEGLFKKNKVNYVKGYGKFVSPSEVSVDTIDGGNTVVKGKHIIIATGSDVKSLPGVTIDEKKIVSSTGALALTEIPKKLVVIGAGYIGLEMGSVWGRLGSEVTVVEFASDIVPTMDAEVRKQFQRSLEKQGMKFQLKTKVVGVDTSGDGVKLTLEPAAGGDQTILETDVVLVSAGRTPFTAGLGLDKIGVETDKIRRILVNERFTTNVSGVYAIGDVIPGPMLAHKAEEDGVACVEFIAGKVGHVDYDKVPGVVYTTPEVAYVGKTEEQVKALGVEYRVGKFPFMANSRAKAIDNAEGLVKILAEKETDKILGVHIMAPNAGELIHEAAIALQYDASSEDIARVCHAHPTMSEAVKEAAMATYDKPHSHMKSWLLLHSLLFIFVQQFTMTWR</sequence>